<dbReference type="EC" id="6.3.5.5" evidence="1"/>
<dbReference type="EMBL" id="Z26919">
    <property type="protein sequence ID" value="CAA81547.1"/>
    <property type="molecule type" value="Genomic_DNA"/>
</dbReference>
<dbReference type="EMBL" id="AL009126">
    <property type="protein sequence ID" value="CAB12964.2"/>
    <property type="molecule type" value="Genomic_DNA"/>
</dbReference>
<dbReference type="PIR" id="I40376">
    <property type="entry name" value="I40376"/>
</dbReference>
<dbReference type="RefSeq" id="NP_389005.2">
    <property type="nucleotide sequence ID" value="NC_000964.3"/>
</dbReference>
<dbReference type="RefSeq" id="WP_003232984.1">
    <property type="nucleotide sequence ID" value="NZ_OZ025638.1"/>
</dbReference>
<dbReference type="SMR" id="P36838"/>
<dbReference type="FunCoup" id="P36838">
    <property type="interactions" value="336"/>
</dbReference>
<dbReference type="STRING" id="224308.BSU11230"/>
<dbReference type="MEROPS" id="C26.963"/>
<dbReference type="PaxDb" id="224308-BSU11230"/>
<dbReference type="EnsemblBacteria" id="CAB12964">
    <property type="protein sequence ID" value="CAB12964"/>
    <property type="gene ID" value="BSU_11230"/>
</dbReference>
<dbReference type="GeneID" id="936387"/>
<dbReference type="KEGG" id="bsu:BSU11230"/>
<dbReference type="PATRIC" id="fig|224308.179.peg.1208"/>
<dbReference type="eggNOG" id="COG0505">
    <property type="taxonomic scope" value="Bacteria"/>
</dbReference>
<dbReference type="InParanoid" id="P36838"/>
<dbReference type="OrthoDB" id="9804328at2"/>
<dbReference type="PhylomeDB" id="P36838"/>
<dbReference type="BioCyc" id="BSUB:BSU11230-MONOMER"/>
<dbReference type="SABIO-RK" id="P36838"/>
<dbReference type="UniPathway" id="UPA00068">
    <property type="reaction ID" value="UER00171"/>
</dbReference>
<dbReference type="Proteomes" id="UP000001570">
    <property type="component" value="Chromosome"/>
</dbReference>
<dbReference type="GO" id="GO:0005951">
    <property type="term" value="C:carbamoyl-phosphate synthase complex"/>
    <property type="evidence" value="ECO:0000318"/>
    <property type="project" value="GO_Central"/>
</dbReference>
<dbReference type="GO" id="GO:0005737">
    <property type="term" value="C:cytoplasm"/>
    <property type="evidence" value="ECO:0000318"/>
    <property type="project" value="GO_Central"/>
</dbReference>
<dbReference type="GO" id="GO:0005524">
    <property type="term" value="F:ATP binding"/>
    <property type="evidence" value="ECO:0007669"/>
    <property type="project" value="UniProtKB-UniRule"/>
</dbReference>
<dbReference type="GO" id="GO:0004088">
    <property type="term" value="F:carbamoyl-phosphate synthase (glutamine-hydrolyzing) activity"/>
    <property type="evidence" value="ECO:0007669"/>
    <property type="project" value="UniProtKB-UniRule"/>
</dbReference>
<dbReference type="GO" id="GO:0004359">
    <property type="term" value="F:glutaminase activity"/>
    <property type="evidence" value="ECO:0007669"/>
    <property type="project" value="RHEA"/>
</dbReference>
<dbReference type="GO" id="GO:0006207">
    <property type="term" value="P:'de novo' pyrimidine nucleobase biosynthetic process"/>
    <property type="evidence" value="ECO:0007669"/>
    <property type="project" value="InterPro"/>
</dbReference>
<dbReference type="GO" id="GO:0044205">
    <property type="term" value="P:'de novo' UMP biosynthetic process"/>
    <property type="evidence" value="ECO:0007669"/>
    <property type="project" value="UniProtKB-UniRule"/>
</dbReference>
<dbReference type="GO" id="GO:0006541">
    <property type="term" value="P:glutamine metabolic process"/>
    <property type="evidence" value="ECO:0007669"/>
    <property type="project" value="InterPro"/>
</dbReference>
<dbReference type="GO" id="GO:0006526">
    <property type="term" value="P:L-arginine biosynthetic process"/>
    <property type="evidence" value="ECO:0000318"/>
    <property type="project" value="GO_Central"/>
</dbReference>
<dbReference type="CDD" id="cd01744">
    <property type="entry name" value="GATase1_CPSase"/>
    <property type="match status" value="1"/>
</dbReference>
<dbReference type="FunFam" id="3.40.50.880:FF:000086">
    <property type="entry name" value="Carbamoyl-phosphate synthase small chain"/>
    <property type="match status" value="1"/>
</dbReference>
<dbReference type="Gene3D" id="3.40.50.880">
    <property type="match status" value="1"/>
</dbReference>
<dbReference type="Gene3D" id="3.50.30.20">
    <property type="entry name" value="Carbamoyl-phosphate synthase small subunit, N-terminal domain"/>
    <property type="match status" value="1"/>
</dbReference>
<dbReference type="HAMAP" id="MF_01209">
    <property type="entry name" value="CPSase_S_chain"/>
    <property type="match status" value="1"/>
</dbReference>
<dbReference type="InterPro" id="IPR050472">
    <property type="entry name" value="Anth_synth/Amidotransfase"/>
</dbReference>
<dbReference type="InterPro" id="IPR006274">
    <property type="entry name" value="CarbamoylP_synth_ssu"/>
</dbReference>
<dbReference type="InterPro" id="IPR002474">
    <property type="entry name" value="CarbamoylP_synth_ssu_N"/>
</dbReference>
<dbReference type="InterPro" id="IPR036480">
    <property type="entry name" value="CarbP_synth_ssu_N_sf"/>
</dbReference>
<dbReference type="InterPro" id="IPR029062">
    <property type="entry name" value="Class_I_gatase-like"/>
</dbReference>
<dbReference type="InterPro" id="IPR035686">
    <property type="entry name" value="CPSase_GATase1"/>
</dbReference>
<dbReference type="InterPro" id="IPR017926">
    <property type="entry name" value="GATASE"/>
</dbReference>
<dbReference type="NCBIfam" id="TIGR01368">
    <property type="entry name" value="CPSaseIIsmall"/>
    <property type="match status" value="1"/>
</dbReference>
<dbReference type="NCBIfam" id="NF009475">
    <property type="entry name" value="PRK12838.1"/>
    <property type="match status" value="1"/>
</dbReference>
<dbReference type="PANTHER" id="PTHR43418:SF7">
    <property type="entry name" value="CARBAMOYL-PHOSPHATE SYNTHASE SMALL CHAIN"/>
    <property type="match status" value="1"/>
</dbReference>
<dbReference type="PANTHER" id="PTHR43418">
    <property type="entry name" value="MULTIFUNCTIONAL TRYPTOPHAN BIOSYNTHESIS PROTEIN-RELATED"/>
    <property type="match status" value="1"/>
</dbReference>
<dbReference type="Pfam" id="PF00988">
    <property type="entry name" value="CPSase_sm_chain"/>
    <property type="match status" value="1"/>
</dbReference>
<dbReference type="Pfam" id="PF00117">
    <property type="entry name" value="GATase"/>
    <property type="match status" value="1"/>
</dbReference>
<dbReference type="PRINTS" id="PR00097">
    <property type="entry name" value="ANTSNTHASEII"/>
</dbReference>
<dbReference type="PRINTS" id="PR00099">
    <property type="entry name" value="CPSGATASE"/>
</dbReference>
<dbReference type="PRINTS" id="PR00096">
    <property type="entry name" value="GATASE"/>
</dbReference>
<dbReference type="SMART" id="SM01097">
    <property type="entry name" value="CPSase_sm_chain"/>
    <property type="match status" value="1"/>
</dbReference>
<dbReference type="SUPFAM" id="SSF52021">
    <property type="entry name" value="Carbamoyl phosphate synthetase, small subunit N-terminal domain"/>
    <property type="match status" value="1"/>
</dbReference>
<dbReference type="SUPFAM" id="SSF52317">
    <property type="entry name" value="Class I glutamine amidotransferase-like"/>
    <property type="match status" value="1"/>
</dbReference>
<dbReference type="PROSITE" id="PS51273">
    <property type="entry name" value="GATASE_TYPE_1"/>
    <property type="match status" value="1"/>
</dbReference>
<keyword id="KW-0028">Amino-acid biosynthesis</keyword>
<keyword id="KW-0055">Arginine biosynthesis</keyword>
<keyword id="KW-0067">ATP-binding</keyword>
<keyword id="KW-0315">Glutamine amidotransferase</keyword>
<keyword id="KW-0436">Ligase</keyword>
<keyword id="KW-0547">Nucleotide-binding</keyword>
<keyword id="KW-1185">Reference proteome</keyword>
<organism>
    <name type="scientific">Bacillus subtilis (strain 168)</name>
    <dbReference type="NCBI Taxonomy" id="224308"/>
    <lineage>
        <taxon>Bacteria</taxon>
        <taxon>Bacillati</taxon>
        <taxon>Bacillota</taxon>
        <taxon>Bacilli</taxon>
        <taxon>Bacillales</taxon>
        <taxon>Bacillaceae</taxon>
        <taxon>Bacillus</taxon>
    </lineage>
</organism>
<accession>P36838</accession>
<evidence type="ECO:0000255" key="1">
    <source>
        <dbReference type="HAMAP-Rule" id="MF_01209"/>
    </source>
</evidence>
<evidence type="ECO:0000305" key="2"/>
<feature type="chain" id="PRO_0000112256" description="Carbamoyl phosphate synthase arginine-specific small chain">
    <location>
        <begin position="1"/>
        <end position="353"/>
    </location>
</feature>
<feature type="domain" description="Glutamine amidotransferase type-1" evidence="1">
    <location>
        <begin position="163"/>
        <end position="349"/>
    </location>
</feature>
<feature type="region of interest" description="CPSase" evidence="1">
    <location>
        <begin position="1"/>
        <end position="162"/>
    </location>
</feature>
<feature type="active site" description="Nucleophile" evidence="1">
    <location>
        <position position="237"/>
    </location>
</feature>
<feature type="active site" evidence="1">
    <location>
        <position position="322"/>
    </location>
</feature>
<feature type="active site" evidence="1">
    <location>
        <position position="324"/>
    </location>
</feature>
<feature type="binding site" evidence="1">
    <location>
        <position position="44"/>
    </location>
    <ligand>
        <name>L-glutamine</name>
        <dbReference type="ChEBI" id="CHEBI:58359"/>
    </ligand>
</feature>
<feature type="binding site" evidence="1">
    <location>
        <position position="210"/>
    </location>
    <ligand>
        <name>L-glutamine</name>
        <dbReference type="ChEBI" id="CHEBI:58359"/>
    </ligand>
</feature>
<feature type="binding site" evidence="1">
    <location>
        <position position="212"/>
    </location>
    <ligand>
        <name>L-glutamine</name>
        <dbReference type="ChEBI" id="CHEBI:58359"/>
    </ligand>
</feature>
<feature type="binding site" evidence="1">
    <location>
        <position position="238"/>
    </location>
    <ligand>
        <name>L-glutamine</name>
        <dbReference type="ChEBI" id="CHEBI:58359"/>
    </ligand>
</feature>
<feature type="binding site" evidence="1">
    <location>
        <position position="241"/>
    </location>
    <ligand>
        <name>L-glutamine</name>
        <dbReference type="ChEBI" id="CHEBI:58359"/>
    </ligand>
</feature>
<feature type="binding site" evidence="1">
    <location>
        <position position="279"/>
    </location>
    <ligand>
        <name>L-glutamine</name>
        <dbReference type="ChEBI" id="CHEBI:58359"/>
    </ligand>
</feature>
<feature type="binding site" evidence="1">
    <location>
        <position position="282"/>
    </location>
    <ligand>
        <name>L-glutamine</name>
        <dbReference type="ChEBI" id="CHEBI:58359"/>
    </ligand>
</feature>
<feature type="sequence conflict" description="In Ref. 1; CAA81547." evidence="2" ref="1">
    <original>P</original>
    <variation>A</variation>
    <location>
        <position position="329"/>
    </location>
</feature>
<reference key="1">
    <citation type="journal article" date="1994" name="Microbiology">
        <title>Sequence and analysis of the citrulline biosynthetic operon argC-F from Bacillus subtilis.</title>
        <authorList>
            <person name="O'Reilly M."/>
            <person name="Devine K.M."/>
        </authorList>
    </citation>
    <scope>NUCLEOTIDE SEQUENCE [GENOMIC DNA]</scope>
    <source>
        <strain>168</strain>
    </source>
</reference>
<reference key="2">
    <citation type="journal article" date="1997" name="Nature">
        <title>The complete genome sequence of the Gram-positive bacterium Bacillus subtilis.</title>
        <authorList>
            <person name="Kunst F."/>
            <person name="Ogasawara N."/>
            <person name="Moszer I."/>
            <person name="Albertini A.M."/>
            <person name="Alloni G."/>
            <person name="Azevedo V."/>
            <person name="Bertero M.G."/>
            <person name="Bessieres P."/>
            <person name="Bolotin A."/>
            <person name="Borchert S."/>
            <person name="Borriss R."/>
            <person name="Boursier L."/>
            <person name="Brans A."/>
            <person name="Braun M."/>
            <person name="Brignell S.C."/>
            <person name="Bron S."/>
            <person name="Brouillet S."/>
            <person name="Bruschi C.V."/>
            <person name="Caldwell B."/>
            <person name="Capuano V."/>
            <person name="Carter N.M."/>
            <person name="Choi S.-K."/>
            <person name="Codani J.-J."/>
            <person name="Connerton I.F."/>
            <person name="Cummings N.J."/>
            <person name="Daniel R.A."/>
            <person name="Denizot F."/>
            <person name="Devine K.M."/>
            <person name="Duesterhoeft A."/>
            <person name="Ehrlich S.D."/>
            <person name="Emmerson P.T."/>
            <person name="Entian K.-D."/>
            <person name="Errington J."/>
            <person name="Fabret C."/>
            <person name="Ferrari E."/>
            <person name="Foulger D."/>
            <person name="Fritz C."/>
            <person name="Fujita M."/>
            <person name="Fujita Y."/>
            <person name="Fuma S."/>
            <person name="Galizzi A."/>
            <person name="Galleron N."/>
            <person name="Ghim S.-Y."/>
            <person name="Glaser P."/>
            <person name="Goffeau A."/>
            <person name="Golightly E.J."/>
            <person name="Grandi G."/>
            <person name="Guiseppi G."/>
            <person name="Guy B.J."/>
            <person name="Haga K."/>
            <person name="Haiech J."/>
            <person name="Harwood C.R."/>
            <person name="Henaut A."/>
            <person name="Hilbert H."/>
            <person name="Holsappel S."/>
            <person name="Hosono S."/>
            <person name="Hullo M.-F."/>
            <person name="Itaya M."/>
            <person name="Jones L.-M."/>
            <person name="Joris B."/>
            <person name="Karamata D."/>
            <person name="Kasahara Y."/>
            <person name="Klaerr-Blanchard M."/>
            <person name="Klein C."/>
            <person name="Kobayashi Y."/>
            <person name="Koetter P."/>
            <person name="Koningstein G."/>
            <person name="Krogh S."/>
            <person name="Kumano M."/>
            <person name="Kurita K."/>
            <person name="Lapidus A."/>
            <person name="Lardinois S."/>
            <person name="Lauber J."/>
            <person name="Lazarevic V."/>
            <person name="Lee S.-M."/>
            <person name="Levine A."/>
            <person name="Liu H."/>
            <person name="Masuda S."/>
            <person name="Mauel C."/>
            <person name="Medigue C."/>
            <person name="Medina N."/>
            <person name="Mellado R.P."/>
            <person name="Mizuno M."/>
            <person name="Moestl D."/>
            <person name="Nakai S."/>
            <person name="Noback M."/>
            <person name="Noone D."/>
            <person name="O'Reilly M."/>
            <person name="Ogawa K."/>
            <person name="Ogiwara A."/>
            <person name="Oudega B."/>
            <person name="Park S.-H."/>
            <person name="Parro V."/>
            <person name="Pohl T.M."/>
            <person name="Portetelle D."/>
            <person name="Porwollik S."/>
            <person name="Prescott A.M."/>
            <person name="Presecan E."/>
            <person name="Pujic P."/>
            <person name="Purnelle B."/>
            <person name="Rapoport G."/>
            <person name="Rey M."/>
            <person name="Reynolds S."/>
            <person name="Rieger M."/>
            <person name="Rivolta C."/>
            <person name="Rocha E."/>
            <person name="Roche B."/>
            <person name="Rose M."/>
            <person name="Sadaie Y."/>
            <person name="Sato T."/>
            <person name="Scanlan E."/>
            <person name="Schleich S."/>
            <person name="Schroeter R."/>
            <person name="Scoffone F."/>
            <person name="Sekiguchi J."/>
            <person name="Sekowska A."/>
            <person name="Seror S.J."/>
            <person name="Serror P."/>
            <person name="Shin B.-S."/>
            <person name="Soldo B."/>
            <person name="Sorokin A."/>
            <person name="Tacconi E."/>
            <person name="Takagi T."/>
            <person name="Takahashi H."/>
            <person name="Takemaru K."/>
            <person name="Takeuchi M."/>
            <person name="Tamakoshi A."/>
            <person name="Tanaka T."/>
            <person name="Terpstra P."/>
            <person name="Tognoni A."/>
            <person name="Tosato V."/>
            <person name="Uchiyama S."/>
            <person name="Vandenbol M."/>
            <person name="Vannier F."/>
            <person name="Vassarotti A."/>
            <person name="Viari A."/>
            <person name="Wambutt R."/>
            <person name="Wedler E."/>
            <person name="Wedler H."/>
            <person name="Weitzenegger T."/>
            <person name="Winters P."/>
            <person name="Wipat A."/>
            <person name="Yamamoto H."/>
            <person name="Yamane K."/>
            <person name="Yasumoto K."/>
            <person name="Yata K."/>
            <person name="Yoshida K."/>
            <person name="Yoshikawa H.-F."/>
            <person name="Zumstein E."/>
            <person name="Yoshikawa H."/>
            <person name="Danchin A."/>
        </authorList>
    </citation>
    <scope>NUCLEOTIDE SEQUENCE [LARGE SCALE GENOMIC DNA]</scope>
    <source>
        <strain>168</strain>
    </source>
</reference>
<reference key="3">
    <citation type="journal article" date="2009" name="Microbiology">
        <title>From a consortium sequence to a unified sequence: the Bacillus subtilis 168 reference genome a decade later.</title>
        <authorList>
            <person name="Barbe V."/>
            <person name="Cruveiller S."/>
            <person name="Kunst F."/>
            <person name="Lenoble P."/>
            <person name="Meurice G."/>
            <person name="Sekowska A."/>
            <person name="Vallenet D."/>
            <person name="Wang T."/>
            <person name="Moszer I."/>
            <person name="Medigue C."/>
            <person name="Danchin A."/>
        </authorList>
    </citation>
    <scope>SEQUENCE REVISION TO 329</scope>
</reference>
<name>CARX_BACSU</name>
<sequence length="353" mass="39083">MEGYLVLEDGTSFSGELDGHENCTGEAVFFTGMTGYQEVLTDPSYKGQIIVFTYPLIGNYGINEKDFESKKPQVKAAVVYEACDHFSHYEAVYSLKEYLQKWNIPLLTHVDTRAVVKKIRANGTMGATVTASKEGAEIALQPENVAEQASAQEISTFGDGNKHIALIDFGYKKSIASSLVKRGCKVTVVPYQQMEAVYNIKPDGIVLSNGPGDPKAIQPYLGKIKSIISRFPTLGICLGHQLIALAFGGNTFKLPFGHRGANHPVIDRKTKRVFMTSQNHSYVVDEQSINEEELTIRFHHVNDTSVEGLAHKKLPVMSVQFHPEAHPGPAESEWIFDDYLKNVIPARREIAHA</sequence>
<comment type="function">
    <text evidence="2">Small subunit of the glutamine-dependent carbamoyl phosphate synthetase (CPSase). CPSase catalyzes the formation of carbamoyl phosphate from the ammonia moiety of glutamine, carbonate, and phosphate donated by ATP, constituting the first step of the biosynthetic pathway leading to arginine and/or urea. The small subunit (glutamine amidotransferase) binds and cleaves glutamine to supply the large subunit with the substrate ammonia.</text>
</comment>
<comment type="catalytic activity">
    <reaction evidence="1">
        <text>hydrogencarbonate + L-glutamine + 2 ATP + H2O = carbamoyl phosphate + L-glutamate + 2 ADP + phosphate + 2 H(+)</text>
        <dbReference type="Rhea" id="RHEA:18633"/>
        <dbReference type="ChEBI" id="CHEBI:15377"/>
        <dbReference type="ChEBI" id="CHEBI:15378"/>
        <dbReference type="ChEBI" id="CHEBI:17544"/>
        <dbReference type="ChEBI" id="CHEBI:29985"/>
        <dbReference type="ChEBI" id="CHEBI:30616"/>
        <dbReference type="ChEBI" id="CHEBI:43474"/>
        <dbReference type="ChEBI" id="CHEBI:58228"/>
        <dbReference type="ChEBI" id="CHEBI:58359"/>
        <dbReference type="ChEBI" id="CHEBI:456216"/>
        <dbReference type="EC" id="6.3.5.5"/>
    </reaction>
</comment>
<comment type="catalytic activity">
    <molecule>Carbamoyl phosphate synthase arginine-specific small chain</molecule>
    <reaction evidence="1">
        <text>L-glutamine + H2O = L-glutamate + NH4(+)</text>
        <dbReference type="Rhea" id="RHEA:15889"/>
        <dbReference type="ChEBI" id="CHEBI:15377"/>
        <dbReference type="ChEBI" id="CHEBI:28938"/>
        <dbReference type="ChEBI" id="CHEBI:29985"/>
        <dbReference type="ChEBI" id="CHEBI:58359"/>
    </reaction>
</comment>
<comment type="pathway">
    <text evidence="1">Amino-acid biosynthesis; L-arginine biosynthesis; carbamoyl phosphate from bicarbonate: step 1/1.</text>
</comment>
<comment type="subunit">
    <text evidence="1">Composed of two chains; the small (or glutamine) chain promotes the hydrolysis of glutamine to ammonia, which is used by the large (or ammonia) chain to synthesize carbamoyl phosphate. Tetramer of heterodimers (alpha,beta)4.</text>
</comment>
<comment type="similarity">
    <text evidence="1">Belongs to the CarA family.</text>
</comment>
<protein>
    <recommendedName>
        <fullName evidence="2">Carbamoyl phosphate synthase arginine-specific small chain</fullName>
        <ecNumber evidence="1">6.3.5.5</ecNumber>
    </recommendedName>
    <alternativeName>
        <fullName evidence="1">Carbamoyl phosphate synthetase glutamine chain 1</fullName>
    </alternativeName>
</protein>
<gene>
    <name evidence="1" type="primary">carA</name>
    <name type="synonym">cpaA</name>
    <name type="ordered locus">BSU11230</name>
</gene>
<proteinExistence type="inferred from homology"/>